<dbReference type="EC" id="3.2.1.52" evidence="1"/>
<dbReference type="EMBL" id="AE003852">
    <property type="protein sequence ID" value="AAF93857.1"/>
    <property type="molecule type" value="Genomic_DNA"/>
</dbReference>
<dbReference type="PIR" id="A82292">
    <property type="entry name" value="A82292"/>
</dbReference>
<dbReference type="RefSeq" id="NP_230341.1">
    <property type="nucleotide sequence ID" value="NC_002505.1"/>
</dbReference>
<dbReference type="RefSeq" id="WP_000529115.1">
    <property type="nucleotide sequence ID" value="NZ_LT906614.1"/>
</dbReference>
<dbReference type="PDB" id="1TR9">
    <property type="method" value="X-ray"/>
    <property type="resolution" value="1.80 A"/>
    <property type="chains" value="A=2-330"/>
</dbReference>
<dbReference type="PDB" id="1Y65">
    <property type="method" value="X-ray"/>
    <property type="resolution" value="1.85 A"/>
    <property type="chains" value="A=2-330"/>
</dbReference>
<dbReference type="PDB" id="2OXN">
    <property type="method" value="X-ray"/>
    <property type="resolution" value="1.70 A"/>
    <property type="chains" value="A=1-330"/>
</dbReference>
<dbReference type="PDB" id="3GS6">
    <property type="method" value="X-ray"/>
    <property type="resolution" value="2.30 A"/>
    <property type="chains" value="A=1-330"/>
</dbReference>
<dbReference type="PDB" id="3GSM">
    <property type="method" value="X-ray"/>
    <property type="resolution" value="2.40 A"/>
    <property type="chains" value="A=1-330"/>
</dbReference>
<dbReference type="PDBsum" id="1TR9"/>
<dbReference type="PDBsum" id="1Y65"/>
<dbReference type="PDBsum" id="2OXN"/>
<dbReference type="PDBsum" id="3GS6"/>
<dbReference type="PDBsum" id="3GSM"/>
<dbReference type="SMR" id="Q9KU37"/>
<dbReference type="STRING" id="243277.VC_0692"/>
<dbReference type="ChEMBL" id="CHEMBL1075035"/>
<dbReference type="DrugBank" id="DB07432">
    <property type="generic name" value="[[(3R,4R,5S,6R)-3-(butanoylamino)-4,5-dihydroxy-6-(hydroxymethyl)oxan-2-ylidene]amino] N-phenylcarbamate"/>
</dbReference>
<dbReference type="DrugBank" id="DB08704">
    <property type="generic name" value="[[(3R,4R,5S,6R)-4,5-dihydroxy-6-(hydroxymethyl)-3-(pentanoylamino)oxan-2-ylidene]amino] N-phenylcarbamate"/>
</dbReference>
<dbReference type="CAZy" id="GH3">
    <property type="family name" value="Glycoside Hydrolase Family 3"/>
</dbReference>
<dbReference type="DNASU" id="2615481"/>
<dbReference type="EnsemblBacteria" id="AAF93857">
    <property type="protein sequence ID" value="AAF93857"/>
    <property type="gene ID" value="VC_0692"/>
</dbReference>
<dbReference type="KEGG" id="vch:VC_0692"/>
<dbReference type="PATRIC" id="fig|243277.26.peg.663"/>
<dbReference type="eggNOG" id="COG1472">
    <property type="taxonomic scope" value="Bacteria"/>
</dbReference>
<dbReference type="HOGENOM" id="CLU_008392_0_0_6"/>
<dbReference type="UniPathway" id="UPA00544"/>
<dbReference type="EvolutionaryTrace" id="Q9KU37"/>
<dbReference type="Proteomes" id="UP000000584">
    <property type="component" value="Chromosome 1"/>
</dbReference>
<dbReference type="GO" id="GO:0005829">
    <property type="term" value="C:cytosol"/>
    <property type="evidence" value="ECO:0000318"/>
    <property type="project" value="GO_Central"/>
</dbReference>
<dbReference type="GO" id="GO:0016231">
    <property type="term" value="F:beta-N-acetylglucosaminidase activity"/>
    <property type="evidence" value="ECO:0000318"/>
    <property type="project" value="GO_Central"/>
</dbReference>
<dbReference type="GO" id="GO:0005975">
    <property type="term" value="P:carbohydrate metabolic process"/>
    <property type="evidence" value="ECO:0007669"/>
    <property type="project" value="InterPro"/>
</dbReference>
<dbReference type="GO" id="GO:0051301">
    <property type="term" value="P:cell division"/>
    <property type="evidence" value="ECO:0007669"/>
    <property type="project" value="UniProtKB-KW"/>
</dbReference>
<dbReference type="GO" id="GO:0071555">
    <property type="term" value="P:cell wall organization"/>
    <property type="evidence" value="ECO:0007669"/>
    <property type="project" value="UniProtKB-KW"/>
</dbReference>
<dbReference type="GO" id="GO:0009252">
    <property type="term" value="P:peptidoglycan biosynthetic process"/>
    <property type="evidence" value="ECO:0007669"/>
    <property type="project" value="UniProtKB-KW"/>
</dbReference>
<dbReference type="GO" id="GO:0009254">
    <property type="term" value="P:peptidoglycan turnover"/>
    <property type="evidence" value="ECO:0000318"/>
    <property type="project" value="GO_Central"/>
</dbReference>
<dbReference type="GO" id="GO:0008360">
    <property type="term" value="P:regulation of cell shape"/>
    <property type="evidence" value="ECO:0007669"/>
    <property type="project" value="UniProtKB-KW"/>
</dbReference>
<dbReference type="GO" id="GO:0046677">
    <property type="term" value="P:response to antibiotic"/>
    <property type="evidence" value="ECO:0007669"/>
    <property type="project" value="UniProtKB-KW"/>
</dbReference>
<dbReference type="FunFam" id="3.20.20.300:FF:000001">
    <property type="entry name" value="Beta-hexosaminidase"/>
    <property type="match status" value="1"/>
</dbReference>
<dbReference type="Gene3D" id="3.20.20.300">
    <property type="entry name" value="Glycoside hydrolase, family 3, N-terminal domain"/>
    <property type="match status" value="1"/>
</dbReference>
<dbReference type="HAMAP" id="MF_00364">
    <property type="entry name" value="NagZ"/>
    <property type="match status" value="1"/>
</dbReference>
<dbReference type="InterPro" id="IPR022956">
    <property type="entry name" value="Beta_hexosaminidase_bac"/>
</dbReference>
<dbReference type="InterPro" id="IPR019800">
    <property type="entry name" value="Glyco_hydro_3_AS"/>
</dbReference>
<dbReference type="InterPro" id="IPR001764">
    <property type="entry name" value="Glyco_hydro_3_N"/>
</dbReference>
<dbReference type="InterPro" id="IPR036962">
    <property type="entry name" value="Glyco_hydro_3_N_sf"/>
</dbReference>
<dbReference type="InterPro" id="IPR017853">
    <property type="entry name" value="Glycoside_hydrolase_SF"/>
</dbReference>
<dbReference type="InterPro" id="IPR050226">
    <property type="entry name" value="NagZ_Beta-hexosaminidase"/>
</dbReference>
<dbReference type="NCBIfam" id="NF003740">
    <property type="entry name" value="PRK05337.1"/>
    <property type="match status" value="1"/>
</dbReference>
<dbReference type="PANTHER" id="PTHR30480:SF13">
    <property type="entry name" value="BETA-HEXOSAMINIDASE"/>
    <property type="match status" value="1"/>
</dbReference>
<dbReference type="PANTHER" id="PTHR30480">
    <property type="entry name" value="BETA-HEXOSAMINIDASE-RELATED"/>
    <property type="match status" value="1"/>
</dbReference>
<dbReference type="Pfam" id="PF00933">
    <property type="entry name" value="Glyco_hydro_3"/>
    <property type="match status" value="1"/>
</dbReference>
<dbReference type="SUPFAM" id="SSF51445">
    <property type="entry name" value="(Trans)glycosidases"/>
    <property type="match status" value="1"/>
</dbReference>
<dbReference type="PROSITE" id="PS00775">
    <property type="entry name" value="GLYCOSYL_HYDROL_F3"/>
    <property type="match status" value="1"/>
</dbReference>
<feature type="chain" id="PRO_0000210800" description="Beta-hexosaminidase">
    <location>
        <begin position="1"/>
        <end position="330"/>
    </location>
</feature>
<feature type="active site" description="Proton donor/acceptor" evidence="1">
    <location>
        <position position="173"/>
    </location>
</feature>
<feature type="active site" description="Nucleophile">
    <location>
        <position position="242"/>
    </location>
</feature>
<feature type="binding site">
    <location>
        <position position="62"/>
    </location>
    <ligand>
        <name>substrate</name>
    </ligand>
</feature>
<feature type="binding site" evidence="1">
    <location>
        <position position="70"/>
    </location>
    <ligand>
        <name>substrate</name>
    </ligand>
</feature>
<feature type="binding site">
    <location>
        <position position="130"/>
    </location>
    <ligand>
        <name>substrate</name>
    </ligand>
</feature>
<feature type="binding site">
    <location>
        <begin position="160"/>
        <end position="161"/>
    </location>
    <ligand>
        <name>substrate</name>
    </ligand>
</feature>
<feature type="site" description="Important for catalytic activity" evidence="1">
    <location>
        <position position="171"/>
    </location>
</feature>
<feature type="strand" evidence="6">
    <location>
        <begin position="3"/>
        <end position="6"/>
    </location>
</feature>
<feature type="strand" evidence="6">
    <location>
        <begin position="9"/>
        <end position="12"/>
    </location>
</feature>
<feature type="helix" evidence="6">
    <location>
        <begin position="15"/>
        <end position="21"/>
    </location>
</feature>
<feature type="strand" evidence="6">
    <location>
        <begin position="26"/>
        <end position="31"/>
    </location>
</feature>
<feature type="helix" evidence="6">
    <location>
        <begin position="33"/>
        <end position="35"/>
    </location>
</feature>
<feature type="helix" evidence="6">
    <location>
        <begin position="39"/>
        <end position="53"/>
    </location>
</feature>
<feature type="strand" evidence="6">
    <location>
        <begin position="58"/>
        <end position="61"/>
    </location>
</feature>
<feature type="strand" evidence="6">
    <location>
        <begin position="63"/>
        <end position="65"/>
    </location>
</feature>
<feature type="strand" evidence="6">
    <location>
        <begin position="68"/>
        <end position="70"/>
    </location>
</feature>
<feature type="helix" evidence="6">
    <location>
        <begin position="81"/>
        <end position="86"/>
    </location>
</feature>
<feature type="helix" evidence="6">
    <location>
        <begin position="90"/>
        <end position="106"/>
    </location>
</feature>
<feature type="turn" evidence="6">
    <location>
        <begin position="107"/>
        <end position="109"/>
    </location>
</feature>
<feature type="turn" evidence="6">
    <location>
        <begin position="125"/>
        <end position="127"/>
    </location>
</feature>
<feature type="helix" evidence="6">
    <location>
        <begin position="128"/>
        <end position="130"/>
    </location>
</feature>
<feature type="helix" evidence="6">
    <location>
        <begin position="136"/>
        <end position="152"/>
    </location>
</feature>
<feature type="strand" evidence="6">
    <location>
        <begin position="158"/>
        <end position="162"/>
    </location>
</feature>
<feature type="strand" evidence="6">
    <location>
        <begin position="173"/>
        <end position="176"/>
    </location>
</feature>
<feature type="helix" evidence="6">
    <location>
        <begin position="185"/>
        <end position="197"/>
    </location>
</feature>
<feature type="strand" evidence="6">
    <location>
        <begin position="201"/>
        <end position="205"/>
    </location>
</feature>
<feature type="turn" evidence="6">
    <location>
        <begin position="211"/>
        <end position="213"/>
    </location>
</feature>
<feature type="strand" evidence="6">
    <location>
        <begin position="214"/>
        <end position="216"/>
    </location>
</feature>
<feature type="helix" evidence="6">
    <location>
        <begin position="218"/>
        <end position="220"/>
    </location>
</feature>
<feature type="helix" evidence="6">
    <location>
        <begin position="222"/>
        <end position="225"/>
    </location>
</feature>
<feature type="helix" evidence="6">
    <location>
        <begin position="226"/>
        <end position="232"/>
    </location>
</feature>
<feature type="strand" evidence="6">
    <location>
        <begin position="237"/>
        <end position="243"/>
    </location>
</feature>
<feature type="helix" evidence="6">
    <location>
        <begin position="244"/>
        <end position="246"/>
    </location>
</feature>
<feature type="helix" evidence="6">
    <location>
        <begin position="249"/>
        <end position="252"/>
    </location>
</feature>
<feature type="helix" evidence="6">
    <location>
        <begin position="255"/>
        <end position="265"/>
    </location>
</feature>
<feature type="strand" evidence="6">
    <location>
        <begin position="268"/>
        <end position="271"/>
    </location>
</feature>
<feature type="helix" evidence="6">
    <location>
        <begin position="276"/>
        <end position="285"/>
    </location>
</feature>
<feature type="helix" evidence="6">
    <location>
        <begin position="292"/>
        <end position="297"/>
    </location>
</feature>
<feature type="helix" evidence="6">
    <location>
        <begin position="305"/>
        <end position="309"/>
    </location>
</feature>
<feature type="helix" evidence="6">
    <location>
        <begin position="312"/>
        <end position="328"/>
    </location>
</feature>
<reference key="1">
    <citation type="journal article" date="2000" name="Nature">
        <title>DNA sequence of both chromosomes of the cholera pathogen Vibrio cholerae.</title>
        <authorList>
            <person name="Heidelberg J.F."/>
            <person name="Eisen J.A."/>
            <person name="Nelson W.C."/>
            <person name="Clayton R.A."/>
            <person name="Gwinn M.L."/>
            <person name="Dodson R.J."/>
            <person name="Haft D.H."/>
            <person name="Hickey E.K."/>
            <person name="Peterson J.D."/>
            <person name="Umayam L.A."/>
            <person name="Gill S.R."/>
            <person name="Nelson K.E."/>
            <person name="Read T.D."/>
            <person name="Tettelin H."/>
            <person name="Richardson D.L."/>
            <person name="Ermolaeva M.D."/>
            <person name="Vamathevan J.J."/>
            <person name="Bass S."/>
            <person name="Qin H."/>
            <person name="Dragoi I."/>
            <person name="Sellers P."/>
            <person name="McDonald L.A."/>
            <person name="Utterback T.R."/>
            <person name="Fleischmann R.D."/>
            <person name="Nierman W.C."/>
            <person name="White O."/>
            <person name="Salzberg S.L."/>
            <person name="Smith H.O."/>
            <person name="Colwell R.R."/>
            <person name="Mekalanos J.J."/>
            <person name="Venter J.C."/>
            <person name="Fraser C.M."/>
        </authorList>
    </citation>
    <scope>NUCLEOTIDE SEQUENCE [LARGE SCALE GENOMIC DNA]</scope>
    <source>
        <strain>ATCC 39315 / El Tor Inaba N16961</strain>
    </source>
</reference>
<reference key="2">
    <citation type="journal article" date="2013" name="ChemBioChem">
        <title>The development of selective inhibitors of NagZ: increased susceptibility of Gram-negative bacteria to beta-lactams.</title>
        <authorList>
            <person name="Stubbs K.A."/>
            <person name="Bacik J.P."/>
            <person name="Perley-Robertson G.E."/>
            <person name="Whitworth G.E."/>
            <person name="Gloster T.M."/>
            <person name="Vocadlo D.J."/>
            <person name="Mark B.L."/>
        </authorList>
    </citation>
    <scope>FUNCTION</scope>
    <scope>CATALYTIC ACTIVITY</scope>
</reference>
<reference key="3">
    <citation type="submission" date="2004-12" db="PDB data bank">
        <title>Structure of beta-hexosaminidase from Vibrio cholerae in complex with N-acetyl-D-glucosamine.</title>
        <authorList>
            <person name="Gorman J."/>
            <person name="Shapiro L."/>
        </authorList>
    </citation>
    <scope>X-RAY CRYSTALLOGRAPHY (1.80 ANGSTROMS) IN COMPLEX WITH N-ACETYL-D-GLUCOSAMINE</scope>
</reference>
<reference key="4">
    <citation type="journal article" date="2007" name="J. Biol. Chem.">
        <title>Small molecule inhibitors of a glycoside hydrolase attenuate inducible AmpC-mediated beta-lactam resistance.</title>
        <authorList>
            <person name="Stubbs K.A."/>
            <person name="Balcewich M."/>
            <person name="Mark B.L."/>
            <person name="Vocadlo D.J."/>
        </authorList>
    </citation>
    <scope>X-RAY CRYSTALLOGRAPHY (1.70 ANGSTROMS) IN COMPLEX WITH SYNTHETIC INHIBITOR</scope>
    <scope>FUNCTION</scope>
    <scope>CATALYTIC ACTIVITY</scope>
</reference>
<reference key="5">
    <citation type="journal article" date="2009" name="Protein Sci.">
        <title>Insight into a strategy for attenuating AmpC-mediated beta-lactam resistance: structural basis for selective inhibition of the glycoside hydrolase NagZ.</title>
        <authorList>
            <person name="Balcewich M.D."/>
            <person name="Stubbs K.A."/>
            <person name="He Y."/>
            <person name="James T.W."/>
            <person name="Davies G.J."/>
            <person name="Vocadlo D.J."/>
            <person name="Mark B.L."/>
        </authorList>
    </citation>
    <scope>X-RAY CRYSTALLOGRAPHY (2.30 ANGSTROMS) IN COMPLEX WITH SYNTHETIC INHIBITOR</scope>
    <scope>CATALYTIC ACTIVITY</scope>
    <scope>FUNCTION</scope>
</reference>
<comment type="function">
    <text evidence="1 2 3 4">Plays a role in peptidoglycan recycling by cleaving the terminal beta-1,4-linked N-acetylglucosamine (GlcNAc) from peptide-linked peptidoglycan fragments, giving rise to free GlcNAc, anhydro-N-acetylmuramic acid and anhydro-N-acetylmuramic acid-linked peptides. Plays a role in beta-lactam antibiotic resistance via its role in generating anhydro-N-acetylmuramic acid-linked peptides; these peptides function as signaling molecules that induce high-level expression of the beta-lactamase AmpC.</text>
</comment>
<comment type="catalytic activity">
    <reaction evidence="1 2 3 4">
        <text>Hydrolysis of terminal non-reducing N-acetyl-D-hexosamine residues in N-acetyl-beta-D-hexosaminides.</text>
        <dbReference type="EC" id="3.2.1.52"/>
    </reaction>
</comment>
<comment type="pathway">
    <text evidence="1">Cell wall biogenesis; peptidoglycan recycling.</text>
</comment>
<comment type="subunit">
    <text evidence="5">Monomer.</text>
</comment>
<comment type="subcellular location">
    <subcellularLocation>
        <location evidence="1">Cytoplasm</location>
    </subcellularLocation>
</comment>
<comment type="similarity">
    <text evidence="1">Belongs to the glycosyl hydrolase 3 family. NagZ subfamily.</text>
</comment>
<keyword id="KW-0002">3D-structure</keyword>
<keyword id="KW-0046">Antibiotic resistance</keyword>
<keyword id="KW-0131">Cell cycle</keyword>
<keyword id="KW-0132">Cell division</keyword>
<keyword id="KW-0133">Cell shape</keyword>
<keyword id="KW-0961">Cell wall biogenesis/degradation</keyword>
<keyword id="KW-0963">Cytoplasm</keyword>
<keyword id="KW-0326">Glycosidase</keyword>
<keyword id="KW-0378">Hydrolase</keyword>
<keyword id="KW-0573">Peptidoglycan synthesis</keyword>
<keyword id="KW-1185">Reference proteome</keyword>
<sequence length="330" mass="36466">MGPLWLDVAGYELSAEDREILQHPTVGGVILFGRNYHDNQQLLALNKAIRQAAKRPILIGVDQEGGRVQRFREGFSRIPPAQYYARAENGVELAEQGGWLMAAELIAHDVDLSFAPVLDMGFACKAIGNRAFGEDVQTVLKHSSAFLRGMKAVGMATTGKHFPGHGAVIADSHLETPYDERETIAQDMAIFRAQIEAGVLDAMMPAHVVYPHYDAQPASGSSYWLKQVLREELGFKGIVFSDDLSMEGAAVMGGPVERSHQALVAGCDMILICNKREAAVEVLDNLPIMEVPQAEALLKKQQFSYSELKRLERWQQASANMQRLIEQFSE</sequence>
<protein>
    <recommendedName>
        <fullName evidence="1">Beta-hexosaminidase</fullName>
        <ecNumber evidence="1">3.2.1.52</ecNumber>
    </recommendedName>
    <alternativeName>
        <fullName evidence="1">Beta-N-acetylhexosaminidase</fullName>
    </alternativeName>
    <alternativeName>
        <fullName evidence="1">N-acetyl-beta-glucosaminidase</fullName>
    </alternativeName>
</protein>
<name>NAGZ_VIBCH</name>
<proteinExistence type="evidence at protein level"/>
<organism>
    <name type="scientific">Vibrio cholerae serotype O1 (strain ATCC 39315 / El Tor Inaba N16961)</name>
    <dbReference type="NCBI Taxonomy" id="243277"/>
    <lineage>
        <taxon>Bacteria</taxon>
        <taxon>Pseudomonadati</taxon>
        <taxon>Pseudomonadota</taxon>
        <taxon>Gammaproteobacteria</taxon>
        <taxon>Vibrionales</taxon>
        <taxon>Vibrionaceae</taxon>
        <taxon>Vibrio</taxon>
    </lineage>
</organism>
<evidence type="ECO:0000255" key="1">
    <source>
        <dbReference type="HAMAP-Rule" id="MF_00364"/>
    </source>
</evidence>
<evidence type="ECO:0000269" key="2">
    <source>
    </source>
</evidence>
<evidence type="ECO:0000269" key="3">
    <source>
    </source>
</evidence>
<evidence type="ECO:0000269" key="4">
    <source>
    </source>
</evidence>
<evidence type="ECO:0000305" key="5"/>
<evidence type="ECO:0007829" key="6">
    <source>
        <dbReference type="PDB" id="2OXN"/>
    </source>
</evidence>
<accession>Q9KU37</accession>
<gene>
    <name evidence="1" type="primary">nagZ</name>
    <name type="ordered locus">VC_0692</name>
</gene>